<feature type="chain" id="PRO_0000396558" description="Lon protease">
    <location>
        <begin position="1"/>
        <end position="880"/>
    </location>
</feature>
<feature type="domain" description="Lon N-terminal" evidence="3">
    <location>
        <begin position="57"/>
        <end position="251"/>
    </location>
</feature>
<feature type="domain" description="Lon proteolytic" evidence="2">
    <location>
        <begin position="640"/>
        <end position="821"/>
    </location>
</feature>
<feature type="region of interest" description="Disordered" evidence="4">
    <location>
        <begin position="1"/>
        <end position="37"/>
    </location>
</feature>
<feature type="region of interest" description="Disordered" evidence="4">
    <location>
        <begin position="826"/>
        <end position="880"/>
    </location>
</feature>
<feature type="compositionally biased region" description="Basic and acidic residues" evidence="4">
    <location>
        <begin position="27"/>
        <end position="37"/>
    </location>
</feature>
<feature type="compositionally biased region" description="Gly residues" evidence="4">
    <location>
        <begin position="826"/>
        <end position="836"/>
    </location>
</feature>
<feature type="compositionally biased region" description="Low complexity" evidence="4">
    <location>
        <begin position="852"/>
        <end position="861"/>
    </location>
</feature>
<feature type="active site" evidence="1">
    <location>
        <position position="727"/>
    </location>
</feature>
<feature type="active site" evidence="1">
    <location>
        <position position="770"/>
    </location>
</feature>
<feature type="binding site" evidence="1">
    <location>
        <begin position="404"/>
        <end position="411"/>
    </location>
    <ligand>
        <name>ATP</name>
        <dbReference type="ChEBI" id="CHEBI:30616"/>
    </ligand>
</feature>
<proteinExistence type="inferred from homology"/>
<organism>
    <name type="scientific">Desulfovibrio desulfuricans (strain ATCC 27774 / DSM 6949 / MB)</name>
    <dbReference type="NCBI Taxonomy" id="525146"/>
    <lineage>
        <taxon>Bacteria</taxon>
        <taxon>Pseudomonadati</taxon>
        <taxon>Thermodesulfobacteriota</taxon>
        <taxon>Desulfovibrionia</taxon>
        <taxon>Desulfovibrionales</taxon>
        <taxon>Desulfovibrionaceae</taxon>
        <taxon>Desulfovibrio</taxon>
    </lineage>
</organism>
<reference key="1">
    <citation type="submission" date="2009-01" db="EMBL/GenBank/DDBJ databases">
        <title>Complete sequence of Desulfovibrio desulfuricans subsp. desulfuricans str. ATCC 27774.</title>
        <authorList>
            <consortium name="US DOE Joint Genome Institute"/>
            <person name="Lucas S."/>
            <person name="Copeland A."/>
            <person name="Lapidus A."/>
            <person name="Glavina del Rio T."/>
            <person name="Tice H."/>
            <person name="Bruce D."/>
            <person name="Goodwin L."/>
            <person name="Pitluck S."/>
            <person name="Sims D."/>
            <person name="Lu M."/>
            <person name="Kiss H."/>
            <person name="Meineke L."/>
            <person name="Brettin T."/>
            <person name="Detter J.C."/>
            <person name="Han C."/>
            <person name="Larimer F."/>
            <person name="Land M."/>
            <person name="Hauser L."/>
            <person name="Kyrpides N."/>
            <person name="Ovchinnikova G."/>
            <person name="Hazen T.C."/>
        </authorList>
    </citation>
    <scope>NUCLEOTIDE SEQUENCE [LARGE SCALE GENOMIC DNA]</scope>
    <source>
        <strain>ATCC 27774 / DSM 6949 / MB</strain>
    </source>
</reference>
<keyword id="KW-0067">ATP-binding</keyword>
<keyword id="KW-0963">Cytoplasm</keyword>
<keyword id="KW-0378">Hydrolase</keyword>
<keyword id="KW-0547">Nucleotide-binding</keyword>
<keyword id="KW-0645">Protease</keyword>
<keyword id="KW-0720">Serine protease</keyword>
<keyword id="KW-0346">Stress response</keyword>
<dbReference type="EC" id="3.4.21.53" evidence="1"/>
<dbReference type="EMBL" id="CP001358">
    <property type="protein sequence ID" value="ACL49525.1"/>
    <property type="molecule type" value="Genomic_DNA"/>
</dbReference>
<dbReference type="SMR" id="B8J198"/>
<dbReference type="STRING" id="525146.Ddes_1626"/>
<dbReference type="MEROPS" id="S16.001"/>
<dbReference type="KEGG" id="dds:Ddes_1626"/>
<dbReference type="eggNOG" id="COG0466">
    <property type="taxonomic scope" value="Bacteria"/>
</dbReference>
<dbReference type="HOGENOM" id="CLU_004109_4_3_7"/>
<dbReference type="GO" id="GO:0005737">
    <property type="term" value="C:cytoplasm"/>
    <property type="evidence" value="ECO:0007669"/>
    <property type="project" value="UniProtKB-SubCell"/>
</dbReference>
<dbReference type="GO" id="GO:0005524">
    <property type="term" value="F:ATP binding"/>
    <property type="evidence" value="ECO:0007669"/>
    <property type="project" value="UniProtKB-UniRule"/>
</dbReference>
<dbReference type="GO" id="GO:0016887">
    <property type="term" value="F:ATP hydrolysis activity"/>
    <property type="evidence" value="ECO:0007669"/>
    <property type="project" value="UniProtKB-UniRule"/>
</dbReference>
<dbReference type="GO" id="GO:0004176">
    <property type="term" value="F:ATP-dependent peptidase activity"/>
    <property type="evidence" value="ECO:0007669"/>
    <property type="project" value="UniProtKB-UniRule"/>
</dbReference>
<dbReference type="GO" id="GO:0043565">
    <property type="term" value="F:sequence-specific DNA binding"/>
    <property type="evidence" value="ECO:0007669"/>
    <property type="project" value="UniProtKB-UniRule"/>
</dbReference>
<dbReference type="GO" id="GO:0004252">
    <property type="term" value="F:serine-type endopeptidase activity"/>
    <property type="evidence" value="ECO:0007669"/>
    <property type="project" value="UniProtKB-UniRule"/>
</dbReference>
<dbReference type="GO" id="GO:0034605">
    <property type="term" value="P:cellular response to heat"/>
    <property type="evidence" value="ECO:0007669"/>
    <property type="project" value="UniProtKB-UniRule"/>
</dbReference>
<dbReference type="GO" id="GO:0006515">
    <property type="term" value="P:protein quality control for misfolded or incompletely synthesized proteins"/>
    <property type="evidence" value="ECO:0007669"/>
    <property type="project" value="UniProtKB-UniRule"/>
</dbReference>
<dbReference type="CDD" id="cd19500">
    <property type="entry name" value="RecA-like_Lon"/>
    <property type="match status" value="1"/>
</dbReference>
<dbReference type="FunFam" id="1.20.5.5270:FF:000002">
    <property type="entry name" value="Lon protease homolog"/>
    <property type="match status" value="1"/>
</dbReference>
<dbReference type="FunFam" id="3.40.50.300:FF:000382">
    <property type="entry name" value="Lon protease homolog 2, peroxisomal"/>
    <property type="match status" value="1"/>
</dbReference>
<dbReference type="Gene3D" id="1.10.8.60">
    <property type="match status" value="1"/>
</dbReference>
<dbReference type="Gene3D" id="1.20.5.5270">
    <property type="match status" value="1"/>
</dbReference>
<dbReference type="Gene3D" id="1.20.58.1480">
    <property type="match status" value="1"/>
</dbReference>
<dbReference type="Gene3D" id="3.30.230.10">
    <property type="match status" value="1"/>
</dbReference>
<dbReference type="Gene3D" id="2.30.130.40">
    <property type="entry name" value="LON domain-like"/>
    <property type="match status" value="1"/>
</dbReference>
<dbReference type="Gene3D" id="3.40.50.300">
    <property type="entry name" value="P-loop containing nucleotide triphosphate hydrolases"/>
    <property type="match status" value="1"/>
</dbReference>
<dbReference type="HAMAP" id="MF_01973">
    <property type="entry name" value="lon_bact"/>
    <property type="match status" value="1"/>
</dbReference>
<dbReference type="InterPro" id="IPR003593">
    <property type="entry name" value="AAA+_ATPase"/>
</dbReference>
<dbReference type="InterPro" id="IPR003959">
    <property type="entry name" value="ATPase_AAA_core"/>
</dbReference>
<dbReference type="InterPro" id="IPR027543">
    <property type="entry name" value="Lon_bac"/>
</dbReference>
<dbReference type="InterPro" id="IPR004815">
    <property type="entry name" value="Lon_bac/euk-typ"/>
</dbReference>
<dbReference type="InterPro" id="IPR054594">
    <property type="entry name" value="Lon_lid"/>
</dbReference>
<dbReference type="InterPro" id="IPR008269">
    <property type="entry name" value="Lon_proteolytic"/>
</dbReference>
<dbReference type="InterPro" id="IPR027065">
    <property type="entry name" value="Lon_Prtase"/>
</dbReference>
<dbReference type="InterPro" id="IPR003111">
    <property type="entry name" value="Lon_prtase_N"/>
</dbReference>
<dbReference type="InterPro" id="IPR046336">
    <property type="entry name" value="Lon_prtase_N_sf"/>
</dbReference>
<dbReference type="InterPro" id="IPR027417">
    <property type="entry name" value="P-loop_NTPase"/>
</dbReference>
<dbReference type="InterPro" id="IPR008268">
    <property type="entry name" value="Peptidase_S16_AS"/>
</dbReference>
<dbReference type="InterPro" id="IPR015947">
    <property type="entry name" value="PUA-like_sf"/>
</dbReference>
<dbReference type="InterPro" id="IPR020568">
    <property type="entry name" value="Ribosomal_Su5_D2-typ_SF"/>
</dbReference>
<dbReference type="InterPro" id="IPR014721">
    <property type="entry name" value="Ribsml_uS5_D2-typ_fold_subgr"/>
</dbReference>
<dbReference type="NCBIfam" id="TIGR00763">
    <property type="entry name" value="lon"/>
    <property type="match status" value="1"/>
</dbReference>
<dbReference type="PANTHER" id="PTHR10046">
    <property type="entry name" value="ATP DEPENDENT LON PROTEASE FAMILY MEMBER"/>
    <property type="match status" value="1"/>
</dbReference>
<dbReference type="Pfam" id="PF00004">
    <property type="entry name" value="AAA"/>
    <property type="match status" value="1"/>
</dbReference>
<dbReference type="Pfam" id="PF05362">
    <property type="entry name" value="Lon_C"/>
    <property type="match status" value="1"/>
</dbReference>
<dbReference type="Pfam" id="PF22667">
    <property type="entry name" value="Lon_lid"/>
    <property type="match status" value="1"/>
</dbReference>
<dbReference type="Pfam" id="PF02190">
    <property type="entry name" value="LON_substr_bdg"/>
    <property type="match status" value="1"/>
</dbReference>
<dbReference type="PIRSF" id="PIRSF001174">
    <property type="entry name" value="Lon_proteas"/>
    <property type="match status" value="1"/>
</dbReference>
<dbReference type="PRINTS" id="PR00830">
    <property type="entry name" value="ENDOLAPTASE"/>
</dbReference>
<dbReference type="SMART" id="SM00382">
    <property type="entry name" value="AAA"/>
    <property type="match status" value="1"/>
</dbReference>
<dbReference type="SMART" id="SM00464">
    <property type="entry name" value="LON"/>
    <property type="match status" value="1"/>
</dbReference>
<dbReference type="SUPFAM" id="SSF52540">
    <property type="entry name" value="P-loop containing nucleoside triphosphate hydrolases"/>
    <property type="match status" value="1"/>
</dbReference>
<dbReference type="SUPFAM" id="SSF88697">
    <property type="entry name" value="PUA domain-like"/>
    <property type="match status" value="1"/>
</dbReference>
<dbReference type="SUPFAM" id="SSF54211">
    <property type="entry name" value="Ribosomal protein S5 domain 2-like"/>
    <property type="match status" value="1"/>
</dbReference>
<dbReference type="PROSITE" id="PS51787">
    <property type="entry name" value="LON_N"/>
    <property type="match status" value="1"/>
</dbReference>
<dbReference type="PROSITE" id="PS51786">
    <property type="entry name" value="LON_PROTEOLYTIC"/>
    <property type="match status" value="1"/>
</dbReference>
<dbReference type="PROSITE" id="PS01046">
    <property type="entry name" value="LON_SER"/>
    <property type="match status" value="1"/>
</dbReference>
<name>LON_DESDA</name>
<accession>B8J198</accession>
<sequence length="880" mass="96389">MADYNDKNYLLHMSGPDSDTGPGIENEDPRAVENPGHDLAESEGGLAAAMQSIPDTLPILPVRDVVIFNYMILPLFIGREKSVQAVEAALKSGRHLLVCAQKEEATEDPGPEDIYQVGTVVQVMRMLKMPDSRVKILVQGVSRARVREFSQVEPFLEAHIETLPEATPKVDATVEALLRSVREQSEKVLSLRGLSSPDVLAVLQGVDDPGRLADLIAANMRMKTADAQQILETEDPLDRLMLVNTQLQREVEVATVQARIQSSAREGMDKAQKDYFLREQLKAIRSELGDKDDEGEEELESLRAALDKAGMPKDVRKEADKQLRRLAGMHADSSEANVVRTYLDWLAELPWKKLSRDRLDIAHAKQILDEDHCGLEKIKDRILEFLSVRKLNPQSKGPILCFAGPPGVGKTSLGRSVARALGRKFQRLSLGGMHDEAEIRGHRRTYIGAMPGRIIQSLKQAGTRNPVIVLDEVDKLGADFRGDPSSALLEVLDPEQNHTFSDHYLNVPFDLSKVMFLCTANHLETIPAPLRDRMEVITLPGYTMQEKAEIARKHLLPKKIKENGLQEKDVTLDDAALEKVIREYTREAGLRNLERELSSICRKLARRKAEGKKGPFRVSTADVEKLLGAPRFIEDEKEKKLMPGMALGLAWTPAGGEVLTVEATVMKGKGGLTLTGQLGDVMKESAQAALSYIRSRAEELGVDPSFVSEYDIHVHVPAGATPKDGPSAGVTLTTALISALNGHRVRADLCMTGEITLQGRVLPVGGIKEKILAGVARGLKHVVIPWQNTKDLEDVPKELLKRITVHPVHHYDELLPLVFEGKSGKGGVSGAGQAGDKGGKSKAAAGKKDVVAARPAKPAAPARRRKDKTEDELPTAEAGA</sequence>
<protein>
    <recommendedName>
        <fullName evidence="1">Lon protease</fullName>
        <ecNumber evidence="1">3.4.21.53</ecNumber>
    </recommendedName>
    <alternativeName>
        <fullName evidence="1">ATP-dependent protease La</fullName>
    </alternativeName>
</protein>
<gene>
    <name evidence="1" type="primary">lon</name>
    <name type="ordered locus">Ddes_1626</name>
</gene>
<comment type="function">
    <text evidence="1">ATP-dependent serine protease that mediates the selective degradation of mutant and abnormal proteins as well as certain short-lived regulatory proteins. Required for cellular homeostasis and for survival from DNA damage and developmental changes induced by stress. Degrades polypeptides processively to yield small peptide fragments that are 5 to 10 amino acids long. Binds to DNA in a double-stranded, site-specific manner.</text>
</comment>
<comment type="catalytic activity">
    <reaction evidence="1">
        <text>Hydrolysis of proteins in presence of ATP.</text>
        <dbReference type="EC" id="3.4.21.53"/>
    </reaction>
</comment>
<comment type="subunit">
    <text evidence="1">Homohexamer. Organized in a ring with a central cavity.</text>
</comment>
<comment type="subcellular location">
    <subcellularLocation>
        <location evidence="1">Cytoplasm</location>
    </subcellularLocation>
</comment>
<comment type="induction">
    <text evidence="1">By heat shock.</text>
</comment>
<comment type="similarity">
    <text evidence="1">Belongs to the peptidase S16 family.</text>
</comment>
<evidence type="ECO:0000255" key="1">
    <source>
        <dbReference type="HAMAP-Rule" id="MF_01973"/>
    </source>
</evidence>
<evidence type="ECO:0000255" key="2">
    <source>
        <dbReference type="PROSITE-ProRule" id="PRU01122"/>
    </source>
</evidence>
<evidence type="ECO:0000255" key="3">
    <source>
        <dbReference type="PROSITE-ProRule" id="PRU01123"/>
    </source>
</evidence>
<evidence type="ECO:0000256" key="4">
    <source>
        <dbReference type="SAM" id="MobiDB-lite"/>
    </source>
</evidence>